<proteinExistence type="inferred from homology"/>
<geneLocation type="chloroplast"/>
<name>RR16_CYACA</name>
<organism>
    <name type="scientific">Cyanidium caldarium</name>
    <name type="common">Red alga</name>
    <dbReference type="NCBI Taxonomy" id="2771"/>
    <lineage>
        <taxon>Eukaryota</taxon>
        <taxon>Rhodophyta</taxon>
        <taxon>Bangiophyceae</taxon>
        <taxon>Cyanidiales</taxon>
        <taxon>Cyanidiaceae</taxon>
        <taxon>Cyanidium</taxon>
    </lineage>
</organism>
<reference key="1">
    <citation type="journal article" date="2000" name="J. Mol. Evol.">
        <title>The structure and gene repertoire of an ancient red algal plastid genome.</title>
        <authorList>
            <person name="Gloeckner G."/>
            <person name="Rosenthal A."/>
            <person name="Valentin K.-U."/>
        </authorList>
    </citation>
    <scope>NUCLEOTIDE SEQUENCE [LARGE SCALE GENOMIC DNA]</scope>
    <source>
        <strain>RK-1</strain>
    </source>
</reference>
<accession>Q9TLY9</accession>
<comment type="subcellular location">
    <subcellularLocation>
        <location>Plastid</location>
        <location>Chloroplast</location>
    </subcellularLocation>
</comment>
<comment type="similarity">
    <text evidence="1">Belongs to the bacterial ribosomal protein bS16 family.</text>
</comment>
<gene>
    <name evidence="1" type="primary">rps16</name>
</gene>
<feature type="chain" id="PRO_0000167297" description="Small ribosomal subunit protein bS16c">
    <location>
        <begin position="1"/>
        <end position="75"/>
    </location>
</feature>
<dbReference type="EMBL" id="AF022186">
    <property type="protein sequence ID" value="AAF12966.1"/>
    <property type="molecule type" value="Genomic_DNA"/>
</dbReference>
<dbReference type="RefSeq" id="NP_045128.1">
    <property type="nucleotide sequence ID" value="NC_001840.1"/>
</dbReference>
<dbReference type="SMR" id="Q9TLY9"/>
<dbReference type="GeneID" id="800264"/>
<dbReference type="GO" id="GO:0009507">
    <property type="term" value="C:chloroplast"/>
    <property type="evidence" value="ECO:0007669"/>
    <property type="project" value="UniProtKB-SubCell"/>
</dbReference>
<dbReference type="GO" id="GO:0005739">
    <property type="term" value="C:mitochondrion"/>
    <property type="evidence" value="ECO:0007669"/>
    <property type="project" value="GOC"/>
</dbReference>
<dbReference type="GO" id="GO:0015935">
    <property type="term" value="C:small ribosomal subunit"/>
    <property type="evidence" value="ECO:0007669"/>
    <property type="project" value="TreeGrafter"/>
</dbReference>
<dbReference type="GO" id="GO:0003735">
    <property type="term" value="F:structural constituent of ribosome"/>
    <property type="evidence" value="ECO:0007669"/>
    <property type="project" value="InterPro"/>
</dbReference>
<dbReference type="GO" id="GO:0032543">
    <property type="term" value="P:mitochondrial translation"/>
    <property type="evidence" value="ECO:0007669"/>
    <property type="project" value="TreeGrafter"/>
</dbReference>
<dbReference type="Gene3D" id="3.30.1320.10">
    <property type="match status" value="1"/>
</dbReference>
<dbReference type="HAMAP" id="MF_00385">
    <property type="entry name" value="Ribosomal_bS16"/>
    <property type="match status" value="1"/>
</dbReference>
<dbReference type="InterPro" id="IPR000307">
    <property type="entry name" value="Ribosomal_bS16"/>
</dbReference>
<dbReference type="InterPro" id="IPR020592">
    <property type="entry name" value="Ribosomal_bS16_CS"/>
</dbReference>
<dbReference type="InterPro" id="IPR023803">
    <property type="entry name" value="Ribosomal_bS16_dom_sf"/>
</dbReference>
<dbReference type="NCBIfam" id="TIGR00002">
    <property type="entry name" value="S16"/>
    <property type="match status" value="1"/>
</dbReference>
<dbReference type="PANTHER" id="PTHR12919">
    <property type="entry name" value="30S RIBOSOMAL PROTEIN S16"/>
    <property type="match status" value="1"/>
</dbReference>
<dbReference type="PANTHER" id="PTHR12919:SF20">
    <property type="entry name" value="SMALL RIBOSOMAL SUBUNIT PROTEIN BS16M"/>
    <property type="match status" value="1"/>
</dbReference>
<dbReference type="Pfam" id="PF00886">
    <property type="entry name" value="Ribosomal_S16"/>
    <property type="match status" value="1"/>
</dbReference>
<dbReference type="SUPFAM" id="SSF54565">
    <property type="entry name" value="Ribosomal protein S16"/>
    <property type="match status" value="1"/>
</dbReference>
<dbReference type="PROSITE" id="PS00732">
    <property type="entry name" value="RIBOSOMAL_S16"/>
    <property type="match status" value="1"/>
</dbReference>
<evidence type="ECO:0000255" key="1">
    <source>
        <dbReference type="HAMAP-Rule" id="MF_00385"/>
    </source>
</evidence>
<evidence type="ECO:0000305" key="2"/>
<keyword id="KW-0150">Chloroplast</keyword>
<keyword id="KW-0934">Plastid</keyword>
<keyword id="KW-0687">Ribonucleoprotein</keyword>
<keyword id="KW-0689">Ribosomal protein</keyword>
<protein>
    <recommendedName>
        <fullName evidence="1">Small ribosomal subunit protein bS16c</fullName>
    </recommendedName>
    <alternativeName>
        <fullName evidence="2">30S ribosomal protein S16, chloroplastic</fullName>
    </alternativeName>
</protein>
<sequence>MIKIRLKRYGKKNRPTYRIVLIESQKPRDSKTIEELGHYDPLLKQANFKFDEIMKRVGQGARLTSRVRYILKQFS</sequence>